<comment type="function">
    <text evidence="1">The RuvA-RuvB-RuvC complex processes Holliday junction (HJ) DNA during genetic recombination and DNA repair. Endonuclease that resolves HJ intermediates. Cleaves cruciform DNA by making single-stranded nicks across the HJ at symmetrical positions within the homologous arms, yielding a 5'-phosphate and a 3'-hydroxyl group; requires a central core of homology in the junction. The consensus cleavage sequence is 5'-(A/T)TT(C/G)-3'. Cleavage occurs on the 3'-side of the TT dinucleotide at the point of strand exchange. HJ branch migration catalyzed by RuvA-RuvB allows RuvC to scan DNA until it finds its consensus sequence, where it cleaves and resolves the cruciform DNA.</text>
</comment>
<comment type="catalytic activity">
    <reaction evidence="1">
        <text>Endonucleolytic cleavage at a junction such as a reciprocal single-stranded crossover between two homologous DNA duplexes (Holliday junction).</text>
        <dbReference type="EC" id="3.1.21.10"/>
    </reaction>
</comment>
<comment type="cofactor">
    <cofactor evidence="1">
        <name>Mg(2+)</name>
        <dbReference type="ChEBI" id="CHEBI:18420"/>
    </cofactor>
    <text evidence="1">Binds 2 Mg(2+) ion per subunit.</text>
</comment>
<comment type="subunit">
    <text evidence="1">Homodimer which binds Holliday junction (HJ) DNA. The HJ becomes 2-fold symmetrical on binding to RuvC with unstacked arms; it has a different conformation from HJ DNA in complex with RuvA. In the full resolvosome a probable DNA-RuvA(4)-RuvB(12)-RuvC(2) complex forms which resolves the HJ.</text>
</comment>
<comment type="subcellular location">
    <subcellularLocation>
        <location evidence="1">Cytoplasm</location>
    </subcellularLocation>
</comment>
<comment type="similarity">
    <text evidence="1">Belongs to the RuvC family.</text>
</comment>
<feature type="chain" id="PRO_1000090576" description="Crossover junction endodeoxyribonuclease RuvC">
    <location>
        <begin position="1"/>
        <end position="169"/>
    </location>
</feature>
<feature type="active site" evidence="1">
    <location>
        <position position="12"/>
    </location>
</feature>
<feature type="active site" evidence="1">
    <location>
        <position position="72"/>
    </location>
</feature>
<feature type="active site" evidence="1">
    <location>
        <position position="144"/>
    </location>
</feature>
<feature type="binding site" evidence="1">
    <location>
        <position position="12"/>
    </location>
    <ligand>
        <name>Mg(2+)</name>
        <dbReference type="ChEBI" id="CHEBI:18420"/>
        <label>1</label>
    </ligand>
</feature>
<feature type="binding site" evidence="1">
    <location>
        <position position="72"/>
    </location>
    <ligand>
        <name>Mg(2+)</name>
        <dbReference type="ChEBI" id="CHEBI:18420"/>
        <label>2</label>
    </ligand>
</feature>
<feature type="binding site" evidence="1">
    <location>
        <position position="144"/>
    </location>
    <ligand>
        <name>Mg(2+)</name>
        <dbReference type="ChEBI" id="CHEBI:18420"/>
        <label>1</label>
    </ligand>
</feature>
<dbReference type="EC" id="3.1.21.10" evidence="1"/>
<dbReference type="EMBL" id="CP000781">
    <property type="protein sequence ID" value="ABS68295.1"/>
    <property type="molecule type" value="Genomic_DNA"/>
</dbReference>
<dbReference type="SMR" id="A7IJV2"/>
<dbReference type="STRING" id="78245.Xaut_3065"/>
<dbReference type="KEGG" id="xau:Xaut_3065"/>
<dbReference type="eggNOG" id="COG0817">
    <property type="taxonomic scope" value="Bacteria"/>
</dbReference>
<dbReference type="HOGENOM" id="CLU_091257_1_0_5"/>
<dbReference type="OrthoDB" id="9805499at2"/>
<dbReference type="PhylomeDB" id="A7IJV2"/>
<dbReference type="Proteomes" id="UP000002417">
    <property type="component" value="Chromosome"/>
</dbReference>
<dbReference type="GO" id="GO:0005737">
    <property type="term" value="C:cytoplasm"/>
    <property type="evidence" value="ECO:0007669"/>
    <property type="project" value="UniProtKB-SubCell"/>
</dbReference>
<dbReference type="GO" id="GO:0048476">
    <property type="term" value="C:Holliday junction resolvase complex"/>
    <property type="evidence" value="ECO:0007669"/>
    <property type="project" value="UniProtKB-UniRule"/>
</dbReference>
<dbReference type="GO" id="GO:0008821">
    <property type="term" value="F:crossover junction DNA endonuclease activity"/>
    <property type="evidence" value="ECO:0007669"/>
    <property type="project" value="UniProtKB-UniRule"/>
</dbReference>
<dbReference type="GO" id="GO:0003677">
    <property type="term" value="F:DNA binding"/>
    <property type="evidence" value="ECO:0007669"/>
    <property type="project" value="UniProtKB-KW"/>
</dbReference>
<dbReference type="GO" id="GO:0000287">
    <property type="term" value="F:magnesium ion binding"/>
    <property type="evidence" value="ECO:0007669"/>
    <property type="project" value="UniProtKB-UniRule"/>
</dbReference>
<dbReference type="GO" id="GO:0006310">
    <property type="term" value="P:DNA recombination"/>
    <property type="evidence" value="ECO:0007669"/>
    <property type="project" value="UniProtKB-UniRule"/>
</dbReference>
<dbReference type="GO" id="GO:0006281">
    <property type="term" value="P:DNA repair"/>
    <property type="evidence" value="ECO:0007669"/>
    <property type="project" value="UniProtKB-UniRule"/>
</dbReference>
<dbReference type="CDD" id="cd16962">
    <property type="entry name" value="RuvC"/>
    <property type="match status" value="1"/>
</dbReference>
<dbReference type="FunFam" id="3.30.420.10:FF:000002">
    <property type="entry name" value="Crossover junction endodeoxyribonuclease RuvC"/>
    <property type="match status" value="1"/>
</dbReference>
<dbReference type="Gene3D" id="3.30.420.10">
    <property type="entry name" value="Ribonuclease H-like superfamily/Ribonuclease H"/>
    <property type="match status" value="1"/>
</dbReference>
<dbReference type="HAMAP" id="MF_00034">
    <property type="entry name" value="RuvC"/>
    <property type="match status" value="1"/>
</dbReference>
<dbReference type="InterPro" id="IPR012337">
    <property type="entry name" value="RNaseH-like_sf"/>
</dbReference>
<dbReference type="InterPro" id="IPR036397">
    <property type="entry name" value="RNaseH_sf"/>
</dbReference>
<dbReference type="InterPro" id="IPR020563">
    <property type="entry name" value="X-over_junc_endoDNase_Mg_BS"/>
</dbReference>
<dbReference type="InterPro" id="IPR002176">
    <property type="entry name" value="X-over_junc_endoDNase_RuvC"/>
</dbReference>
<dbReference type="NCBIfam" id="TIGR00228">
    <property type="entry name" value="ruvC"/>
    <property type="match status" value="1"/>
</dbReference>
<dbReference type="PANTHER" id="PTHR30194">
    <property type="entry name" value="CROSSOVER JUNCTION ENDODEOXYRIBONUCLEASE RUVC"/>
    <property type="match status" value="1"/>
</dbReference>
<dbReference type="PANTHER" id="PTHR30194:SF3">
    <property type="entry name" value="CROSSOVER JUNCTION ENDODEOXYRIBONUCLEASE RUVC"/>
    <property type="match status" value="1"/>
</dbReference>
<dbReference type="Pfam" id="PF02075">
    <property type="entry name" value="RuvC"/>
    <property type="match status" value="1"/>
</dbReference>
<dbReference type="PRINTS" id="PR00696">
    <property type="entry name" value="RSOLVASERUVC"/>
</dbReference>
<dbReference type="SUPFAM" id="SSF53098">
    <property type="entry name" value="Ribonuclease H-like"/>
    <property type="match status" value="1"/>
</dbReference>
<dbReference type="PROSITE" id="PS01321">
    <property type="entry name" value="RUVC"/>
    <property type="match status" value="1"/>
</dbReference>
<accession>A7IJV2</accession>
<name>RUVC_XANP2</name>
<protein>
    <recommendedName>
        <fullName evidence="1">Crossover junction endodeoxyribonuclease RuvC</fullName>
        <ecNumber evidence="1">3.1.21.10</ecNumber>
    </recommendedName>
    <alternativeName>
        <fullName evidence="1">Holliday junction nuclease RuvC</fullName>
    </alternativeName>
    <alternativeName>
        <fullName evidence="1">Holliday junction resolvase RuvC</fullName>
    </alternativeName>
</protein>
<organism>
    <name type="scientific">Xanthobacter autotrophicus (strain ATCC BAA-1158 / Py2)</name>
    <dbReference type="NCBI Taxonomy" id="78245"/>
    <lineage>
        <taxon>Bacteria</taxon>
        <taxon>Pseudomonadati</taxon>
        <taxon>Pseudomonadota</taxon>
        <taxon>Alphaproteobacteria</taxon>
        <taxon>Hyphomicrobiales</taxon>
        <taxon>Xanthobacteraceae</taxon>
        <taxon>Xanthobacter</taxon>
    </lineage>
</organism>
<keyword id="KW-0963">Cytoplasm</keyword>
<keyword id="KW-0227">DNA damage</keyword>
<keyword id="KW-0233">DNA recombination</keyword>
<keyword id="KW-0234">DNA repair</keyword>
<keyword id="KW-0238">DNA-binding</keyword>
<keyword id="KW-0255">Endonuclease</keyword>
<keyword id="KW-0378">Hydrolase</keyword>
<keyword id="KW-0460">Magnesium</keyword>
<keyword id="KW-0479">Metal-binding</keyword>
<keyword id="KW-0540">Nuclease</keyword>
<keyword id="KW-1185">Reference proteome</keyword>
<evidence type="ECO:0000255" key="1">
    <source>
        <dbReference type="HAMAP-Rule" id="MF_00034"/>
    </source>
</evidence>
<gene>
    <name evidence="1" type="primary">ruvC</name>
    <name type="ordered locus">Xaut_3065</name>
</gene>
<proteinExistence type="inferred from homology"/>
<reference key="1">
    <citation type="submission" date="2007-07" db="EMBL/GenBank/DDBJ databases">
        <title>Complete sequence of chromosome of Xanthobacter autotrophicus Py2.</title>
        <authorList>
            <consortium name="US DOE Joint Genome Institute"/>
            <person name="Copeland A."/>
            <person name="Lucas S."/>
            <person name="Lapidus A."/>
            <person name="Barry K."/>
            <person name="Glavina del Rio T."/>
            <person name="Hammon N."/>
            <person name="Israni S."/>
            <person name="Dalin E."/>
            <person name="Tice H."/>
            <person name="Pitluck S."/>
            <person name="Sims D."/>
            <person name="Brettin T."/>
            <person name="Bruce D."/>
            <person name="Detter J.C."/>
            <person name="Han C."/>
            <person name="Tapia R."/>
            <person name="Brainard J."/>
            <person name="Schmutz J."/>
            <person name="Larimer F."/>
            <person name="Land M."/>
            <person name="Hauser L."/>
            <person name="Kyrpides N."/>
            <person name="Kim E."/>
            <person name="Ensigns S.A."/>
            <person name="Richardson P."/>
        </authorList>
    </citation>
    <scope>NUCLEOTIDE SEQUENCE [LARGE SCALE GENOMIC DNA]</scope>
    <source>
        <strain>ATCC BAA-1158 / Py2</strain>
    </source>
</reference>
<sequence length="169" mass="17839">MDLNAIRILGLDPGLRRTGWGVIDVTGSRLAFVACGTILPPEQAPMGERLAHLHRELLGVIERFSPQEAAVEETFVNMNPSSTLKLGQARGVVLLAPAQMGLPVAEYAALLVKKSVVGAGRAEKAQVRMMIGILLPKATPETEDASDALAVAVTHAHHRGAAARARAAL</sequence>